<comment type="function">
    <text evidence="1">ATP-dependent RNA helicase which may be involved in mRNA turnover.</text>
</comment>
<comment type="catalytic activity">
    <reaction>
        <text>ATP + H2O = ADP + phosphate + H(+)</text>
        <dbReference type="Rhea" id="RHEA:13065"/>
        <dbReference type="ChEBI" id="CHEBI:15377"/>
        <dbReference type="ChEBI" id="CHEBI:15378"/>
        <dbReference type="ChEBI" id="CHEBI:30616"/>
        <dbReference type="ChEBI" id="CHEBI:43474"/>
        <dbReference type="ChEBI" id="CHEBI:456216"/>
        <dbReference type="EC" id="3.6.4.13"/>
    </reaction>
</comment>
<comment type="subcellular location">
    <subcellularLocation>
        <location evidence="2">Cytoplasm</location>
        <location evidence="2">P-body</location>
    </subcellularLocation>
    <subcellularLocation>
        <location evidence="2">Cytoplasm</location>
    </subcellularLocation>
    <subcellularLocation>
        <location evidence="2">Nucleus</location>
    </subcellularLocation>
    <text evidence="2">Upon cellular stress, relocalizes to stress granules.</text>
</comment>
<comment type="domain">
    <text>The Q motif is unique to and characteristic of the DEAD box family of RNA helicases and controls ATP binding and hydrolysis.</text>
</comment>
<comment type="similarity">
    <text evidence="6">Belongs to the DEAD box helicase family. DDX6/DHH1 subfamily.</text>
</comment>
<feature type="chain" id="PRO_0000327431" description="Probable ATP-dependent RNA helicase ddx6">
    <location>
        <begin position="1"/>
        <end position="423"/>
    </location>
</feature>
<feature type="domain" description="Helicase ATP-binding" evidence="3">
    <location>
        <begin position="80"/>
        <end position="250"/>
    </location>
</feature>
<feature type="domain" description="Helicase C-terminal" evidence="4">
    <location>
        <begin position="260"/>
        <end position="420"/>
    </location>
</feature>
<feature type="region of interest" description="Disordered" evidence="5">
    <location>
        <begin position="1"/>
        <end position="46"/>
    </location>
</feature>
<feature type="short sequence motif" description="Q motif">
    <location>
        <begin position="49"/>
        <end position="77"/>
    </location>
</feature>
<feature type="short sequence motif" description="DEAD box">
    <location>
        <begin position="198"/>
        <end position="201"/>
    </location>
</feature>
<feature type="compositionally biased region" description="Basic and acidic residues" evidence="5">
    <location>
        <begin position="32"/>
        <end position="41"/>
    </location>
</feature>
<feature type="binding site" evidence="3">
    <location>
        <begin position="93"/>
        <end position="100"/>
    </location>
    <ligand>
        <name>ATP</name>
        <dbReference type="ChEBI" id="CHEBI:30616"/>
    </ligand>
</feature>
<keyword id="KW-0067">ATP-binding</keyword>
<keyword id="KW-0963">Cytoplasm</keyword>
<keyword id="KW-0347">Helicase</keyword>
<keyword id="KW-0378">Hydrolase</keyword>
<keyword id="KW-0507">mRNA processing</keyword>
<keyword id="KW-0547">Nucleotide-binding</keyword>
<keyword id="KW-0539">Nucleus</keyword>
<keyword id="KW-1185">Reference proteome</keyword>
<keyword id="KW-0694">RNA-binding</keyword>
<dbReference type="EC" id="3.6.4.13"/>
<dbReference type="EMBL" id="AAFI02000185">
    <property type="protein sequence ID" value="EAL61523.1"/>
    <property type="molecule type" value="Genomic_DNA"/>
</dbReference>
<dbReference type="RefSeq" id="XP_629938.1">
    <property type="nucleotide sequence ID" value="XM_629936.1"/>
</dbReference>
<dbReference type="SMR" id="Q54E49"/>
<dbReference type="FunCoup" id="Q54E49">
    <property type="interactions" value="818"/>
</dbReference>
<dbReference type="STRING" id="44689.Q54E49"/>
<dbReference type="PaxDb" id="44689-DDB0234196"/>
<dbReference type="EnsemblProtists" id="EAL61523">
    <property type="protein sequence ID" value="EAL61523"/>
    <property type="gene ID" value="DDB_G0291804"/>
</dbReference>
<dbReference type="GeneID" id="8628344"/>
<dbReference type="KEGG" id="ddi:DDB_G0291804"/>
<dbReference type="dictyBase" id="DDB_G0291804">
    <property type="gene designation" value="ddx6"/>
</dbReference>
<dbReference type="VEuPathDB" id="AmoebaDB:DDB_G0291804"/>
<dbReference type="eggNOG" id="KOG0326">
    <property type="taxonomic scope" value="Eukaryota"/>
</dbReference>
<dbReference type="HOGENOM" id="CLU_003041_30_0_1"/>
<dbReference type="InParanoid" id="Q54E49"/>
<dbReference type="OMA" id="TYEDRHT"/>
<dbReference type="PhylomeDB" id="Q54E49"/>
<dbReference type="Reactome" id="R-DDI-430039">
    <property type="pathway name" value="mRNA decay by 5' to 3' exoribonuclease"/>
</dbReference>
<dbReference type="PRO" id="PR:Q54E49"/>
<dbReference type="Proteomes" id="UP000002195">
    <property type="component" value="Chromosome 6"/>
</dbReference>
<dbReference type="GO" id="GO:0010494">
    <property type="term" value="C:cytoplasmic stress granule"/>
    <property type="evidence" value="ECO:0000318"/>
    <property type="project" value="GO_Central"/>
</dbReference>
<dbReference type="GO" id="GO:0005634">
    <property type="term" value="C:nucleus"/>
    <property type="evidence" value="ECO:0007669"/>
    <property type="project" value="UniProtKB-SubCell"/>
</dbReference>
<dbReference type="GO" id="GO:0000932">
    <property type="term" value="C:P-body"/>
    <property type="evidence" value="ECO:0000318"/>
    <property type="project" value="GO_Central"/>
</dbReference>
<dbReference type="GO" id="GO:0005524">
    <property type="term" value="F:ATP binding"/>
    <property type="evidence" value="ECO:0007669"/>
    <property type="project" value="UniProtKB-KW"/>
</dbReference>
<dbReference type="GO" id="GO:0016887">
    <property type="term" value="F:ATP hydrolysis activity"/>
    <property type="evidence" value="ECO:0007669"/>
    <property type="project" value="RHEA"/>
</dbReference>
<dbReference type="GO" id="GO:0003729">
    <property type="term" value="F:mRNA binding"/>
    <property type="evidence" value="ECO:0000318"/>
    <property type="project" value="GO_Central"/>
</dbReference>
<dbReference type="GO" id="GO:0003724">
    <property type="term" value="F:RNA helicase activity"/>
    <property type="evidence" value="ECO:0007669"/>
    <property type="project" value="UniProtKB-EC"/>
</dbReference>
<dbReference type="GO" id="GO:0006397">
    <property type="term" value="P:mRNA processing"/>
    <property type="evidence" value="ECO:0007669"/>
    <property type="project" value="UniProtKB-KW"/>
</dbReference>
<dbReference type="GO" id="GO:0017148">
    <property type="term" value="P:negative regulation of translation"/>
    <property type="evidence" value="ECO:0000318"/>
    <property type="project" value="GO_Central"/>
</dbReference>
<dbReference type="GO" id="GO:0033962">
    <property type="term" value="P:P-body assembly"/>
    <property type="evidence" value="ECO:0000318"/>
    <property type="project" value="GO_Central"/>
</dbReference>
<dbReference type="GO" id="GO:0034063">
    <property type="term" value="P:stress granule assembly"/>
    <property type="evidence" value="ECO:0000318"/>
    <property type="project" value="GO_Central"/>
</dbReference>
<dbReference type="CDD" id="cd17940">
    <property type="entry name" value="DEADc_DDX6"/>
    <property type="match status" value="1"/>
</dbReference>
<dbReference type="CDD" id="cd18787">
    <property type="entry name" value="SF2_C_DEAD"/>
    <property type="match status" value="1"/>
</dbReference>
<dbReference type="FunFam" id="3.40.50.300:FF:000114">
    <property type="entry name" value="ATP-dependent RNA helicase DDX6"/>
    <property type="match status" value="1"/>
</dbReference>
<dbReference type="Gene3D" id="3.40.50.300">
    <property type="entry name" value="P-loop containing nucleotide triphosphate hydrolases"/>
    <property type="match status" value="2"/>
</dbReference>
<dbReference type="InterPro" id="IPR011545">
    <property type="entry name" value="DEAD/DEAH_box_helicase_dom"/>
</dbReference>
<dbReference type="InterPro" id="IPR014001">
    <property type="entry name" value="Helicase_ATP-bd"/>
</dbReference>
<dbReference type="InterPro" id="IPR001650">
    <property type="entry name" value="Helicase_C-like"/>
</dbReference>
<dbReference type="InterPro" id="IPR027417">
    <property type="entry name" value="P-loop_NTPase"/>
</dbReference>
<dbReference type="InterPro" id="IPR000629">
    <property type="entry name" value="RNA-helicase_DEAD-box_CS"/>
</dbReference>
<dbReference type="InterPro" id="IPR014014">
    <property type="entry name" value="RNA_helicase_DEAD_Q_motif"/>
</dbReference>
<dbReference type="PANTHER" id="PTHR47960">
    <property type="entry name" value="DEAD-BOX ATP-DEPENDENT RNA HELICASE 50"/>
    <property type="match status" value="1"/>
</dbReference>
<dbReference type="Pfam" id="PF00270">
    <property type="entry name" value="DEAD"/>
    <property type="match status" value="1"/>
</dbReference>
<dbReference type="Pfam" id="PF00271">
    <property type="entry name" value="Helicase_C"/>
    <property type="match status" value="1"/>
</dbReference>
<dbReference type="SMART" id="SM00487">
    <property type="entry name" value="DEXDc"/>
    <property type="match status" value="1"/>
</dbReference>
<dbReference type="SMART" id="SM00490">
    <property type="entry name" value="HELICc"/>
    <property type="match status" value="1"/>
</dbReference>
<dbReference type="SUPFAM" id="SSF52540">
    <property type="entry name" value="P-loop containing nucleoside triphosphate hydrolases"/>
    <property type="match status" value="1"/>
</dbReference>
<dbReference type="PROSITE" id="PS00039">
    <property type="entry name" value="DEAD_ATP_HELICASE"/>
    <property type="match status" value="1"/>
</dbReference>
<dbReference type="PROSITE" id="PS51192">
    <property type="entry name" value="HELICASE_ATP_BIND_1"/>
    <property type="match status" value="1"/>
</dbReference>
<dbReference type="PROSITE" id="PS51194">
    <property type="entry name" value="HELICASE_CTER"/>
    <property type="match status" value="1"/>
</dbReference>
<dbReference type="PROSITE" id="PS51195">
    <property type="entry name" value="Q_MOTIF"/>
    <property type="match status" value="1"/>
</dbReference>
<accession>Q54E49</accession>
<reference key="1">
    <citation type="journal article" date="2005" name="Nature">
        <title>The genome of the social amoeba Dictyostelium discoideum.</title>
        <authorList>
            <person name="Eichinger L."/>
            <person name="Pachebat J.A."/>
            <person name="Gloeckner G."/>
            <person name="Rajandream M.A."/>
            <person name="Sucgang R."/>
            <person name="Berriman M."/>
            <person name="Song J."/>
            <person name="Olsen R."/>
            <person name="Szafranski K."/>
            <person name="Xu Q."/>
            <person name="Tunggal B."/>
            <person name="Kummerfeld S."/>
            <person name="Madera M."/>
            <person name="Konfortov B.A."/>
            <person name="Rivero F."/>
            <person name="Bankier A.T."/>
            <person name="Lehmann R."/>
            <person name="Hamlin N."/>
            <person name="Davies R."/>
            <person name="Gaudet P."/>
            <person name="Fey P."/>
            <person name="Pilcher K."/>
            <person name="Chen G."/>
            <person name="Saunders D."/>
            <person name="Sodergren E.J."/>
            <person name="Davis P."/>
            <person name="Kerhornou A."/>
            <person name="Nie X."/>
            <person name="Hall N."/>
            <person name="Anjard C."/>
            <person name="Hemphill L."/>
            <person name="Bason N."/>
            <person name="Farbrother P."/>
            <person name="Desany B."/>
            <person name="Just E."/>
            <person name="Morio T."/>
            <person name="Rost R."/>
            <person name="Churcher C.M."/>
            <person name="Cooper J."/>
            <person name="Haydock S."/>
            <person name="van Driessche N."/>
            <person name="Cronin A."/>
            <person name="Goodhead I."/>
            <person name="Muzny D.M."/>
            <person name="Mourier T."/>
            <person name="Pain A."/>
            <person name="Lu M."/>
            <person name="Harper D."/>
            <person name="Lindsay R."/>
            <person name="Hauser H."/>
            <person name="James K.D."/>
            <person name="Quiles M."/>
            <person name="Madan Babu M."/>
            <person name="Saito T."/>
            <person name="Buchrieser C."/>
            <person name="Wardroper A."/>
            <person name="Felder M."/>
            <person name="Thangavelu M."/>
            <person name="Johnson D."/>
            <person name="Knights A."/>
            <person name="Loulseged H."/>
            <person name="Mungall K.L."/>
            <person name="Oliver K."/>
            <person name="Price C."/>
            <person name="Quail M.A."/>
            <person name="Urushihara H."/>
            <person name="Hernandez J."/>
            <person name="Rabbinowitsch E."/>
            <person name="Steffen D."/>
            <person name="Sanders M."/>
            <person name="Ma J."/>
            <person name="Kohara Y."/>
            <person name="Sharp S."/>
            <person name="Simmonds M.N."/>
            <person name="Spiegler S."/>
            <person name="Tivey A."/>
            <person name="Sugano S."/>
            <person name="White B."/>
            <person name="Walker D."/>
            <person name="Woodward J.R."/>
            <person name="Winckler T."/>
            <person name="Tanaka Y."/>
            <person name="Shaulsky G."/>
            <person name="Schleicher M."/>
            <person name="Weinstock G.M."/>
            <person name="Rosenthal A."/>
            <person name="Cox E.C."/>
            <person name="Chisholm R.L."/>
            <person name="Gibbs R.A."/>
            <person name="Loomis W.F."/>
            <person name="Platzer M."/>
            <person name="Kay R.R."/>
            <person name="Williams J.G."/>
            <person name="Dear P.H."/>
            <person name="Noegel A.A."/>
            <person name="Barrell B.G."/>
            <person name="Kuspa A."/>
        </authorList>
    </citation>
    <scope>NUCLEOTIDE SEQUENCE [LARGE SCALE GENOMIC DNA]</scope>
    <source>
        <strain>AX4</strain>
    </source>
</reference>
<protein>
    <recommendedName>
        <fullName>Probable ATP-dependent RNA helicase ddx6</fullName>
        <ecNumber>3.6.4.13</ecNumber>
    </recommendedName>
    <alternativeName>
        <fullName>DEAD box protein 6</fullName>
    </alternativeName>
</protein>
<gene>
    <name type="primary">ddx6</name>
    <name type="ORF">DDB_G0291804</name>
</gene>
<proteinExistence type="inferred from homology"/>
<evidence type="ECO:0000250" key="1"/>
<evidence type="ECO:0000250" key="2">
    <source>
        <dbReference type="UniProtKB" id="P26196"/>
    </source>
</evidence>
<evidence type="ECO:0000255" key="3">
    <source>
        <dbReference type="PROSITE-ProRule" id="PRU00541"/>
    </source>
</evidence>
<evidence type="ECO:0000255" key="4">
    <source>
        <dbReference type="PROSITE-ProRule" id="PRU00542"/>
    </source>
</evidence>
<evidence type="ECO:0000256" key="5">
    <source>
        <dbReference type="SAM" id="MobiDB-lite"/>
    </source>
</evidence>
<evidence type="ECO:0000305" key="6"/>
<organism>
    <name type="scientific">Dictyostelium discoideum</name>
    <name type="common">Social amoeba</name>
    <dbReference type="NCBI Taxonomy" id="44689"/>
    <lineage>
        <taxon>Eukaryota</taxon>
        <taxon>Amoebozoa</taxon>
        <taxon>Evosea</taxon>
        <taxon>Eumycetozoa</taxon>
        <taxon>Dictyostelia</taxon>
        <taxon>Dictyosteliales</taxon>
        <taxon>Dictyosteliaceae</taxon>
        <taxon>Dictyostelium</taxon>
    </lineage>
</organism>
<name>DDX6_DICDI</name>
<sequence length="423" mass="48171">MNSQQNKLPQQPQQPPSSIVDDDNWKSQLKLPPRDERRQTEDVTATEGNDFDDLHLKRDLLRGIFEKGYVKPSPIQEKAIPIALAGRDIMARAKNGTGKTASFLIPALEKTDPTKDVIQVLILVPTRELALQTSQVCKELGKYMNVQVMASTGGTSLKDDIMRLYNPVHILVATPGRVLDLAQKNVANLSNCHTMIMDEADKLLSQEFQPLVEQLINFLPQQRQILLFSATFPVTVKSFKEHYLQQAFEINLMEELTLKGVTQYYAFVEERQKIHCLNTLFSKLQINQSIIFCNSVNRVELLAKKITELGYSCFFIHAKMVQAHRNRVFHDFRNGACRNLVSSDLFTRGIDIQDVNVVINFDFPKHSETYLHRIGRSGRFGHLGLAINLITYEDRFSLYKIEQELGTEIKPIPPVIDKSLYAA</sequence>